<gene>
    <name evidence="1" type="primary">dnaA</name>
    <name type="ordered locus">Ppro_0001</name>
</gene>
<reference key="1">
    <citation type="submission" date="2006-10" db="EMBL/GenBank/DDBJ databases">
        <title>Complete sequence of chromosome of Pelobacter propionicus DSM 2379.</title>
        <authorList>
            <consortium name="US DOE Joint Genome Institute"/>
            <person name="Copeland A."/>
            <person name="Lucas S."/>
            <person name="Lapidus A."/>
            <person name="Barry K."/>
            <person name="Detter J.C."/>
            <person name="Glavina del Rio T."/>
            <person name="Hammon N."/>
            <person name="Israni S."/>
            <person name="Dalin E."/>
            <person name="Tice H."/>
            <person name="Pitluck S."/>
            <person name="Saunders E."/>
            <person name="Brettin T."/>
            <person name="Bruce D."/>
            <person name="Han C."/>
            <person name="Tapia R."/>
            <person name="Schmutz J."/>
            <person name="Larimer F."/>
            <person name="Land M."/>
            <person name="Hauser L."/>
            <person name="Kyrpides N."/>
            <person name="Kim E."/>
            <person name="Lovley D."/>
            <person name="Richardson P."/>
        </authorList>
    </citation>
    <scope>NUCLEOTIDE SEQUENCE [LARGE SCALE GENOMIC DNA]</scope>
    <source>
        <strain>DSM 2379 / NBRC 103807 / OttBd1</strain>
    </source>
</reference>
<organism>
    <name type="scientific">Pelobacter propionicus (strain DSM 2379 / NBRC 103807 / OttBd1)</name>
    <dbReference type="NCBI Taxonomy" id="338966"/>
    <lineage>
        <taxon>Bacteria</taxon>
        <taxon>Pseudomonadati</taxon>
        <taxon>Thermodesulfobacteriota</taxon>
        <taxon>Desulfuromonadia</taxon>
        <taxon>Desulfuromonadales</taxon>
        <taxon>Desulfuromonadaceae</taxon>
        <taxon>Pelobacter</taxon>
    </lineage>
</organism>
<dbReference type="EMBL" id="CP000482">
    <property type="protein sequence ID" value="ABK97642.1"/>
    <property type="molecule type" value="Genomic_DNA"/>
</dbReference>
<dbReference type="RefSeq" id="WP_011733957.1">
    <property type="nucleotide sequence ID" value="NC_008609.1"/>
</dbReference>
<dbReference type="SMR" id="A1AJX2"/>
<dbReference type="STRING" id="338966.Ppro_0001"/>
<dbReference type="KEGG" id="ppd:Ppro_0001"/>
<dbReference type="eggNOG" id="COG0593">
    <property type="taxonomic scope" value="Bacteria"/>
</dbReference>
<dbReference type="HOGENOM" id="CLU_026910_3_1_7"/>
<dbReference type="OrthoDB" id="9807019at2"/>
<dbReference type="Proteomes" id="UP000006732">
    <property type="component" value="Chromosome"/>
</dbReference>
<dbReference type="GO" id="GO:0005737">
    <property type="term" value="C:cytoplasm"/>
    <property type="evidence" value="ECO:0007669"/>
    <property type="project" value="UniProtKB-SubCell"/>
</dbReference>
<dbReference type="GO" id="GO:0005886">
    <property type="term" value="C:plasma membrane"/>
    <property type="evidence" value="ECO:0007669"/>
    <property type="project" value="TreeGrafter"/>
</dbReference>
<dbReference type="GO" id="GO:0005524">
    <property type="term" value="F:ATP binding"/>
    <property type="evidence" value="ECO:0007669"/>
    <property type="project" value="UniProtKB-UniRule"/>
</dbReference>
<dbReference type="GO" id="GO:0016887">
    <property type="term" value="F:ATP hydrolysis activity"/>
    <property type="evidence" value="ECO:0007669"/>
    <property type="project" value="InterPro"/>
</dbReference>
<dbReference type="GO" id="GO:0003688">
    <property type="term" value="F:DNA replication origin binding"/>
    <property type="evidence" value="ECO:0007669"/>
    <property type="project" value="UniProtKB-UniRule"/>
</dbReference>
<dbReference type="GO" id="GO:0008289">
    <property type="term" value="F:lipid binding"/>
    <property type="evidence" value="ECO:0007669"/>
    <property type="project" value="UniProtKB-KW"/>
</dbReference>
<dbReference type="GO" id="GO:0006270">
    <property type="term" value="P:DNA replication initiation"/>
    <property type="evidence" value="ECO:0007669"/>
    <property type="project" value="UniProtKB-UniRule"/>
</dbReference>
<dbReference type="GO" id="GO:0006275">
    <property type="term" value="P:regulation of DNA replication"/>
    <property type="evidence" value="ECO:0007669"/>
    <property type="project" value="UniProtKB-UniRule"/>
</dbReference>
<dbReference type="CDD" id="cd00009">
    <property type="entry name" value="AAA"/>
    <property type="match status" value="1"/>
</dbReference>
<dbReference type="CDD" id="cd06571">
    <property type="entry name" value="Bac_DnaA_C"/>
    <property type="match status" value="1"/>
</dbReference>
<dbReference type="FunFam" id="3.40.50.300:FF:000668">
    <property type="entry name" value="Chromosomal replication initiator protein DnaA"/>
    <property type="match status" value="1"/>
</dbReference>
<dbReference type="Gene3D" id="1.10.1750.10">
    <property type="match status" value="1"/>
</dbReference>
<dbReference type="Gene3D" id="1.10.8.60">
    <property type="match status" value="1"/>
</dbReference>
<dbReference type="Gene3D" id="3.30.300.180">
    <property type="match status" value="1"/>
</dbReference>
<dbReference type="Gene3D" id="3.40.50.300">
    <property type="entry name" value="P-loop containing nucleotide triphosphate hydrolases"/>
    <property type="match status" value="1"/>
</dbReference>
<dbReference type="HAMAP" id="MF_00377">
    <property type="entry name" value="DnaA_bact"/>
    <property type="match status" value="1"/>
</dbReference>
<dbReference type="InterPro" id="IPR003593">
    <property type="entry name" value="AAA+_ATPase"/>
</dbReference>
<dbReference type="InterPro" id="IPR001957">
    <property type="entry name" value="Chromosome_initiator_DnaA"/>
</dbReference>
<dbReference type="InterPro" id="IPR020591">
    <property type="entry name" value="Chromosome_initiator_DnaA-like"/>
</dbReference>
<dbReference type="InterPro" id="IPR018312">
    <property type="entry name" value="Chromosome_initiator_DnaA_CS"/>
</dbReference>
<dbReference type="InterPro" id="IPR013159">
    <property type="entry name" value="DnaA_C"/>
</dbReference>
<dbReference type="InterPro" id="IPR013317">
    <property type="entry name" value="DnaA_dom"/>
</dbReference>
<dbReference type="InterPro" id="IPR024633">
    <property type="entry name" value="DnaA_N_dom"/>
</dbReference>
<dbReference type="InterPro" id="IPR038454">
    <property type="entry name" value="DnaA_N_sf"/>
</dbReference>
<dbReference type="InterPro" id="IPR027417">
    <property type="entry name" value="P-loop_NTPase"/>
</dbReference>
<dbReference type="InterPro" id="IPR010921">
    <property type="entry name" value="Trp_repressor/repl_initiator"/>
</dbReference>
<dbReference type="NCBIfam" id="TIGR00362">
    <property type="entry name" value="DnaA"/>
    <property type="match status" value="1"/>
</dbReference>
<dbReference type="PANTHER" id="PTHR30050">
    <property type="entry name" value="CHROMOSOMAL REPLICATION INITIATOR PROTEIN DNAA"/>
    <property type="match status" value="1"/>
</dbReference>
<dbReference type="PANTHER" id="PTHR30050:SF2">
    <property type="entry name" value="CHROMOSOMAL REPLICATION INITIATOR PROTEIN DNAA"/>
    <property type="match status" value="1"/>
</dbReference>
<dbReference type="Pfam" id="PF00308">
    <property type="entry name" value="Bac_DnaA"/>
    <property type="match status" value="1"/>
</dbReference>
<dbReference type="Pfam" id="PF08299">
    <property type="entry name" value="Bac_DnaA_C"/>
    <property type="match status" value="1"/>
</dbReference>
<dbReference type="Pfam" id="PF11638">
    <property type="entry name" value="DnaA_N"/>
    <property type="match status" value="1"/>
</dbReference>
<dbReference type="PRINTS" id="PR00051">
    <property type="entry name" value="DNAA"/>
</dbReference>
<dbReference type="SMART" id="SM00382">
    <property type="entry name" value="AAA"/>
    <property type="match status" value="1"/>
</dbReference>
<dbReference type="SMART" id="SM00760">
    <property type="entry name" value="Bac_DnaA_C"/>
    <property type="match status" value="1"/>
</dbReference>
<dbReference type="SUPFAM" id="SSF52540">
    <property type="entry name" value="P-loop containing nucleoside triphosphate hydrolases"/>
    <property type="match status" value="1"/>
</dbReference>
<dbReference type="SUPFAM" id="SSF48295">
    <property type="entry name" value="TrpR-like"/>
    <property type="match status" value="1"/>
</dbReference>
<dbReference type="PROSITE" id="PS01008">
    <property type="entry name" value="DNAA"/>
    <property type="match status" value="1"/>
</dbReference>
<comment type="function">
    <text evidence="1">Plays an essential role in the initiation and regulation of chromosomal replication. ATP-DnaA binds to the origin of replication (oriC) to initiate formation of the DNA replication initiation complex once per cell cycle. Binds the DnaA box (a 9 base pair repeat at the origin) and separates the double-stranded (ds)DNA. Forms a right-handed helical filament on oriC DNA; dsDNA binds to the exterior of the filament while single-stranded (ss)DNA is stabiized in the filament's interior. The ATP-DnaA-oriC complex binds and stabilizes one strand of the AT-rich DNA unwinding element (DUE), permitting loading of DNA polymerase. After initiation quickly degrades to an ADP-DnaA complex that is not apt for DNA replication. Binds acidic phospholipids.</text>
</comment>
<comment type="subunit">
    <text evidence="1">Oligomerizes as a right-handed, spiral filament on DNA at oriC.</text>
</comment>
<comment type="subcellular location">
    <subcellularLocation>
        <location evidence="1">Cytoplasm</location>
    </subcellularLocation>
</comment>
<comment type="domain">
    <text evidence="1">Domain I is involved in oligomerization and binding regulators, domain II is flexibile and of varying length in different bacteria, domain III forms the AAA+ region, while domain IV binds dsDNA.</text>
</comment>
<comment type="similarity">
    <text evidence="1">Belongs to the DnaA family.</text>
</comment>
<accession>A1AJX2</accession>
<keyword id="KW-0067">ATP-binding</keyword>
<keyword id="KW-0963">Cytoplasm</keyword>
<keyword id="KW-0235">DNA replication</keyword>
<keyword id="KW-0238">DNA-binding</keyword>
<keyword id="KW-0446">Lipid-binding</keyword>
<keyword id="KW-0547">Nucleotide-binding</keyword>
<keyword id="KW-1185">Reference proteome</keyword>
<proteinExistence type="inferred from homology"/>
<name>DNAA_PELPD</name>
<evidence type="ECO:0000255" key="1">
    <source>
        <dbReference type="HAMAP-Rule" id="MF_00377"/>
    </source>
</evidence>
<feature type="chain" id="PRO_1000048684" description="Chromosomal replication initiator protein DnaA">
    <location>
        <begin position="1"/>
        <end position="450"/>
    </location>
</feature>
<feature type="region of interest" description="Domain I, interacts with DnaA modulators" evidence="1">
    <location>
        <begin position="1"/>
        <end position="69"/>
    </location>
</feature>
<feature type="region of interest" description="Domain II" evidence="1">
    <location>
        <begin position="69"/>
        <end position="113"/>
    </location>
</feature>
<feature type="region of interest" description="Domain III, AAA+ region" evidence="1">
    <location>
        <begin position="114"/>
        <end position="330"/>
    </location>
</feature>
<feature type="region of interest" description="Domain IV, binds dsDNA" evidence="1">
    <location>
        <begin position="331"/>
        <end position="450"/>
    </location>
</feature>
<feature type="binding site" evidence="1">
    <location>
        <position position="158"/>
    </location>
    <ligand>
        <name>ATP</name>
        <dbReference type="ChEBI" id="CHEBI:30616"/>
    </ligand>
</feature>
<feature type="binding site" evidence="1">
    <location>
        <position position="160"/>
    </location>
    <ligand>
        <name>ATP</name>
        <dbReference type="ChEBI" id="CHEBI:30616"/>
    </ligand>
</feature>
<feature type="binding site" evidence="1">
    <location>
        <position position="161"/>
    </location>
    <ligand>
        <name>ATP</name>
        <dbReference type="ChEBI" id="CHEBI:30616"/>
    </ligand>
</feature>
<feature type="binding site" evidence="1">
    <location>
        <position position="162"/>
    </location>
    <ligand>
        <name>ATP</name>
        <dbReference type="ChEBI" id="CHEBI:30616"/>
    </ligand>
</feature>
<sequence>MHDVWRQATENLEKVMSESDFTTWIQPISYSHADDTTVFLTVPTLFFKEWIDEHYRQVLVGALSVTAGKKYFIELVVQEEDQNAEVPQAEDLIIKGHQEIEQPVTSQPETSSSSLNPKYTFELFVSGTGNQFAHAAAMAVANNPADTYNPLFIYGGVGLGKSHLLNAIGHTIRSSSPNLSVCYCSAEKFMYEMVNALRQKRMDQFRSRFRNLDVLLVDDIQFISGKVGTQEEFFHTFNALYDMQKQIVITSDKFPREISDLEERLRSRFEWGLIADIQPPDLETKIAILKKKSEITRIQLPEDVIYFLASSDTRNIRELEGMLIRLGAYSSLQGIPITLDMARENLKEIIGDRRKDITVELIQKVVAEQFGLKMADLKSSKRLKNFVQARQIAIWLCRDMTSFSYPDIGAKFGGKDHSTVIYAAKKIDLALKDDPKLSRIIEDIKLILLK</sequence>
<protein>
    <recommendedName>
        <fullName evidence="1">Chromosomal replication initiator protein DnaA</fullName>
    </recommendedName>
</protein>